<keyword id="KW-0068">Autocatalytic cleavage</keyword>
<keyword id="KW-0963">Cytoplasm</keyword>
<keyword id="KW-0210">Decarboxylase</keyword>
<keyword id="KW-0456">Lyase</keyword>
<keyword id="KW-0566">Pantothenate biosynthesis</keyword>
<keyword id="KW-0670">Pyruvate</keyword>
<keyword id="KW-1185">Reference proteome</keyword>
<keyword id="KW-0704">Schiff base</keyword>
<keyword id="KW-0865">Zymogen</keyword>
<proteinExistence type="inferred from homology"/>
<dbReference type="EC" id="4.1.1.11" evidence="1"/>
<dbReference type="EMBL" id="CP000529">
    <property type="protein sequence ID" value="ABM36253.1"/>
    <property type="molecule type" value="Genomic_DNA"/>
</dbReference>
<dbReference type="RefSeq" id="WP_011800347.1">
    <property type="nucleotide sequence ID" value="NC_008781.1"/>
</dbReference>
<dbReference type="SMR" id="A1VKS5"/>
<dbReference type="STRING" id="365044.Pnap_0936"/>
<dbReference type="KEGG" id="pna:Pnap_0936"/>
<dbReference type="eggNOG" id="COG0853">
    <property type="taxonomic scope" value="Bacteria"/>
</dbReference>
<dbReference type="HOGENOM" id="CLU_115305_2_1_4"/>
<dbReference type="OrthoDB" id="9803983at2"/>
<dbReference type="UniPathway" id="UPA00028">
    <property type="reaction ID" value="UER00002"/>
</dbReference>
<dbReference type="Proteomes" id="UP000000644">
    <property type="component" value="Chromosome"/>
</dbReference>
<dbReference type="GO" id="GO:0005829">
    <property type="term" value="C:cytosol"/>
    <property type="evidence" value="ECO:0007669"/>
    <property type="project" value="TreeGrafter"/>
</dbReference>
<dbReference type="GO" id="GO:0004068">
    <property type="term" value="F:aspartate 1-decarboxylase activity"/>
    <property type="evidence" value="ECO:0007669"/>
    <property type="project" value="UniProtKB-UniRule"/>
</dbReference>
<dbReference type="GO" id="GO:0006523">
    <property type="term" value="P:alanine biosynthetic process"/>
    <property type="evidence" value="ECO:0007669"/>
    <property type="project" value="InterPro"/>
</dbReference>
<dbReference type="GO" id="GO:0015940">
    <property type="term" value="P:pantothenate biosynthetic process"/>
    <property type="evidence" value="ECO:0007669"/>
    <property type="project" value="UniProtKB-UniRule"/>
</dbReference>
<dbReference type="CDD" id="cd06919">
    <property type="entry name" value="Asp_decarbox"/>
    <property type="match status" value="1"/>
</dbReference>
<dbReference type="Gene3D" id="2.40.40.20">
    <property type="match status" value="1"/>
</dbReference>
<dbReference type="HAMAP" id="MF_00446">
    <property type="entry name" value="PanD"/>
    <property type="match status" value="1"/>
</dbReference>
<dbReference type="InterPro" id="IPR009010">
    <property type="entry name" value="Asp_de-COase-like_dom_sf"/>
</dbReference>
<dbReference type="InterPro" id="IPR003190">
    <property type="entry name" value="Asp_decarbox"/>
</dbReference>
<dbReference type="NCBIfam" id="TIGR00223">
    <property type="entry name" value="panD"/>
    <property type="match status" value="1"/>
</dbReference>
<dbReference type="PANTHER" id="PTHR21012">
    <property type="entry name" value="ASPARTATE 1-DECARBOXYLASE"/>
    <property type="match status" value="1"/>
</dbReference>
<dbReference type="PANTHER" id="PTHR21012:SF0">
    <property type="entry name" value="ASPARTATE 1-DECARBOXYLASE"/>
    <property type="match status" value="1"/>
</dbReference>
<dbReference type="Pfam" id="PF02261">
    <property type="entry name" value="Asp_decarbox"/>
    <property type="match status" value="1"/>
</dbReference>
<dbReference type="PIRSF" id="PIRSF006246">
    <property type="entry name" value="Asp_decarbox"/>
    <property type="match status" value="1"/>
</dbReference>
<dbReference type="SUPFAM" id="SSF50692">
    <property type="entry name" value="ADC-like"/>
    <property type="match status" value="1"/>
</dbReference>
<gene>
    <name evidence="1" type="primary">panD</name>
    <name type="ordered locus">Pnap_0936</name>
</gene>
<comment type="function">
    <text evidence="1">Catalyzes the pyruvoyl-dependent decarboxylation of aspartate to produce beta-alanine.</text>
</comment>
<comment type="catalytic activity">
    <reaction evidence="1">
        <text>L-aspartate + H(+) = beta-alanine + CO2</text>
        <dbReference type="Rhea" id="RHEA:19497"/>
        <dbReference type="ChEBI" id="CHEBI:15378"/>
        <dbReference type="ChEBI" id="CHEBI:16526"/>
        <dbReference type="ChEBI" id="CHEBI:29991"/>
        <dbReference type="ChEBI" id="CHEBI:57966"/>
        <dbReference type="EC" id="4.1.1.11"/>
    </reaction>
</comment>
<comment type="cofactor">
    <cofactor evidence="1">
        <name>pyruvate</name>
        <dbReference type="ChEBI" id="CHEBI:15361"/>
    </cofactor>
    <text evidence="1">Binds 1 pyruvoyl group covalently per subunit.</text>
</comment>
<comment type="pathway">
    <text evidence="1">Cofactor biosynthesis; (R)-pantothenate biosynthesis; beta-alanine from L-aspartate: step 1/1.</text>
</comment>
<comment type="subunit">
    <text evidence="1">Heterooctamer of four alpha and four beta subunits.</text>
</comment>
<comment type="subcellular location">
    <subcellularLocation>
        <location evidence="1">Cytoplasm</location>
    </subcellularLocation>
</comment>
<comment type="PTM">
    <text evidence="1">Is synthesized initially as an inactive proenzyme, which is activated by self-cleavage at a specific serine bond to produce a beta-subunit with a hydroxyl group at its C-terminus and an alpha-subunit with a pyruvoyl group at its N-terminus.</text>
</comment>
<comment type="similarity">
    <text evidence="1">Belongs to the PanD family.</text>
</comment>
<reference key="1">
    <citation type="journal article" date="2009" name="Environ. Microbiol.">
        <title>The genome of Polaromonas naphthalenivorans strain CJ2, isolated from coal tar-contaminated sediment, reveals physiological and metabolic versatility and evolution through extensive horizontal gene transfer.</title>
        <authorList>
            <person name="Yagi J.M."/>
            <person name="Sims D."/>
            <person name="Brettin T."/>
            <person name="Bruce D."/>
            <person name="Madsen E.L."/>
        </authorList>
    </citation>
    <scope>NUCLEOTIDE SEQUENCE [LARGE SCALE GENOMIC DNA]</scope>
    <source>
        <strain>CJ2</strain>
    </source>
</reference>
<name>PAND_POLNA</name>
<accession>A1VKS5</accession>
<protein>
    <recommendedName>
        <fullName evidence="1">Aspartate 1-decarboxylase</fullName>
        <ecNumber evidence="1">4.1.1.11</ecNumber>
    </recommendedName>
    <alternativeName>
        <fullName evidence="1">Aspartate alpha-decarboxylase</fullName>
    </alternativeName>
    <component>
        <recommendedName>
            <fullName evidence="1">Aspartate 1-decarboxylase beta chain</fullName>
        </recommendedName>
    </component>
    <component>
        <recommendedName>
            <fullName evidence="1">Aspartate 1-decarboxylase alpha chain</fullName>
        </recommendedName>
    </component>
</protein>
<feature type="chain" id="PRO_0000307045" description="Aspartate 1-decarboxylase beta chain" evidence="1">
    <location>
        <begin position="1"/>
        <end position="24"/>
    </location>
</feature>
<feature type="chain" id="PRO_0000307046" description="Aspartate 1-decarboxylase alpha chain" evidence="1">
    <location>
        <begin position="25"/>
        <end position="127"/>
    </location>
</feature>
<feature type="active site" description="Schiff-base intermediate with substrate; via pyruvic acid" evidence="1">
    <location>
        <position position="25"/>
    </location>
</feature>
<feature type="active site" description="Proton donor" evidence="1">
    <location>
        <position position="58"/>
    </location>
</feature>
<feature type="binding site" evidence="1">
    <location>
        <position position="57"/>
    </location>
    <ligand>
        <name>substrate</name>
    </ligand>
</feature>
<feature type="binding site" evidence="1">
    <location>
        <begin position="73"/>
        <end position="75"/>
    </location>
    <ligand>
        <name>substrate</name>
    </ligand>
</feature>
<feature type="modified residue" description="Pyruvic acid (Ser)" evidence="1">
    <location>
        <position position="25"/>
    </location>
</feature>
<evidence type="ECO:0000255" key="1">
    <source>
        <dbReference type="HAMAP-Rule" id="MF_00446"/>
    </source>
</evidence>
<organism>
    <name type="scientific">Polaromonas naphthalenivorans (strain CJ2)</name>
    <dbReference type="NCBI Taxonomy" id="365044"/>
    <lineage>
        <taxon>Bacteria</taxon>
        <taxon>Pseudomonadati</taxon>
        <taxon>Pseudomonadota</taxon>
        <taxon>Betaproteobacteria</taxon>
        <taxon>Burkholderiales</taxon>
        <taxon>Comamonadaceae</taxon>
        <taxon>Polaromonas</taxon>
    </lineage>
</organism>
<sequence length="127" mass="14111">MFRTLLKSKIHRAAVTHCELNYEGSCAIDEDLLDAANLGENEQIHIWNINNGERFITYAIRAERGSRIISVNGSAARRAAVGDLVIIAAFAQVEEKEVAGFSPKLVFVNPDNRIKEERSTIPVQMAD</sequence>